<sequence>MFSHLPFDCVLLLLLLLLTRSSEVEYRAEVGQNAYLPCFYTPAAPGNLVPVCWGKGACPVFECGNVVLRTDERDVNYWTSRYWLNGDFRKGDVSLTIENVTLADSGIYCCRIQIPGIMNDEKFNLKLVIKPAKVTPAPTRQRDFTAAFPRMLTTRGHGPAETQTLGSLPDINLTQISTLANELRDSRLANDLRDSGATIRIGIYIGAGICAGLALALIFGALIFKWYSHSKEKIQNLSLISLANLPPSGLANAVAEGIRSEENIYTIEENVYEVEEPNEYYCYVSSRQQPSQPLGCRFAMP</sequence>
<accession>Q8TDQ0</accession>
<accession>B2RAY2</accession>
<accession>Q8WW60</accession>
<accession>Q96K94</accession>
<protein>
    <recommendedName>
        <fullName>Hepatitis A virus cellular receptor 2</fullName>
        <shortName>HAVcr-2</shortName>
    </recommendedName>
    <alternativeName>
        <fullName>T-cell immunoglobulin and mucin domain-containing protein 3</fullName>
        <shortName>TIMD-3</shortName>
    </alternativeName>
    <alternativeName>
        <fullName>T-cell immunoglobulin mucin receptor 3</fullName>
        <shortName>TIM-3</shortName>
    </alternativeName>
    <alternativeName>
        <fullName>T-cell membrane protein 3</fullName>
    </alternativeName>
    <cdAntigenName>CD366</cdAntigenName>
</protein>
<gene>
    <name type="primary">HAVCR2</name>
    <name type="synonym">TIM3</name>
    <name type="synonym">TIMD3</name>
</gene>
<keyword id="KW-0002">3D-structure</keyword>
<keyword id="KW-1064">Adaptive immunity</keyword>
<keyword id="KW-0025">Alternative splicing</keyword>
<keyword id="KW-0965">Cell junction</keyword>
<keyword id="KW-1003">Cell membrane</keyword>
<keyword id="KW-0225">Disease variant</keyword>
<keyword id="KW-1015">Disulfide bond</keyword>
<keyword id="KW-0325">Glycoprotein</keyword>
<keyword id="KW-0391">Immunity</keyword>
<keyword id="KW-0393">Immunoglobulin domain</keyword>
<keyword id="KW-0395">Inflammatory response</keyword>
<keyword id="KW-0399">Innate immunity</keyword>
<keyword id="KW-0449">Lipoprotein</keyword>
<keyword id="KW-0472">Membrane</keyword>
<keyword id="KW-0479">Metal-binding</keyword>
<keyword id="KW-0564">Palmitate</keyword>
<keyword id="KW-0597">Phosphoprotein</keyword>
<keyword id="KW-1267">Proteomics identification</keyword>
<keyword id="KW-1185">Reference proteome</keyword>
<keyword id="KW-0732">Signal</keyword>
<keyword id="KW-0812">Transmembrane</keyword>
<keyword id="KW-1133">Transmembrane helix</keyword>
<keyword id="KW-0832">Ubl conjugation</keyword>
<organism>
    <name type="scientific">Homo sapiens</name>
    <name type="common">Human</name>
    <dbReference type="NCBI Taxonomy" id="9606"/>
    <lineage>
        <taxon>Eukaryota</taxon>
        <taxon>Metazoa</taxon>
        <taxon>Chordata</taxon>
        <taxon>Craniata</taxon>
        <taxon>Vertebrata</taxon>
        <taxon>Euteleostomi</taxon>
        <taxon>Mammalia</taxon>
        <taxon>Eutheria</taxon>
        <taxon>Euarchontoglires</taxon>
        <taxon>Primates</taxon>
        <taxon>Haplorrhini</taxon>
        <taxon>Catarrhini</taxon>
        <taxon>Hominidae</taxon>
        <taxon>Homo</taxon>
    </lineage>
</organism>
<reference key="1">
    <citation type="journal article" date="2002" name="Nature">
        <title>Th1-specific cell surface protein Tim-3 regulates macrophage activation and severity of an autoimmune disease.</title>
        <authorList>
            <person name="Monney L."/>
            <person name="Sabatos C.A."/>
            <person name="Gaglia J.L."/>
            <person name="Ryu A."/>
            <person name="Waldner H."/>
            <person name="Chernova T."/>
            <person name="Manning S."/>
            <person name="Greenfield E.A."/>
            <person name="Coyle A.J."/>
            <person name="Sobel R.A."/>
            <person name="Freeman G.J."/>
            <person name="Kuchroo V.K."/>
        </authorList>
    </citation>
    <scope>NUCLEOTIDE SEQUENCE [MRNA] (ISOFORM 1)</scope>
    <scope>FUNCTION</scope>
    <scope>VARIANT LEU-140</scope>
    <scope>TISSUE SPECIFICITY</scope>
</reference>
<reference key="2">
    <citation type="submission" date="2000-04" db="EMBL/GenBank/DDBJ databases">
        <title>Novel human hepatitis A virus cellular receptor.</title>
        <authorList>
            <person name="Zhang W."/>
            <person name="Wan T."/>
            <person name="Li N."/>
            <person name="Cao X."/>
        </authorList>
    </citation>
    <scope>NUCLEOTIDE SEQUENCE [MRNA] (ISOFORM 1)</scope>
    <scope>VARIANT LEU-140</scope>
    <scope>VARIANT SPTCL ILE-101</scope>
</reference>
<reference key="3">
    <citation type="submission" date="2001-12" db="EMBL/GenBank/DDBJ databases">
        <title>A homolog to human kidney injury molecule-1 is expressed in hepatoma cells.</title>
        <authorList>
            <person name="Kuehn E.W."/>
            <person name="Ichimura T."/>
            <person name="Bonventre J.V."/>
        </authorList>
    </citation>
    <scope>NUCLEOTIDE SEQUENCE [MRNA] (ISOFORM 1)</scope>
    <scope>VARIANT LEU-140</scope>
    <source>
        <tissue>Hepatoma</tissue>
    </source>
</reference>
<reference key="4">
    <citation type="journal article" date="2004" name="Nat. Genet.">
        <title>Complete sequencing and characterization of 21,243 full-length human cDNAs.</title>
        <authorList>
            <person name="Ota T."/>
            <person name="Suzuki Y."/>
            <person name="Nishikawa T."/>
            <person name="Otsuki T."/>
            <person name="Sugiyama T."/>
            <person name="Irie R."/>
            <person name="Wakamatsu A."/>
            <person name="Hayashi K."/>
            <person name="Sato H."/>
            <person name="Nagai K."/>
            <person name="Kimura K."/>
            <person name="Makita H."/>
            <person name="Sekine M."/>
            <person name="Obayashi M."/>
            <person name="Nishi T."/>
            <person name="Shibahara T."/>
            <person name="Tanaka T."/>
            <person name="Ishii S."/>
            <person name="Yamamoto J."/>
            <person name="Saito K."/>
            <person name="Kawai Y."/>
            <person name="Isono Y."/>
            <person name="Nakamura Y."/>
            <person name="Nagahari K."/>
            <person name="Murakami K."/>
            <person name="Yasuda T."/>
            <person name="Iwayanagi T."/>
            <person name="Wagatsuma M."/>
            <person name="Shiratori A."/>
            <person name="Sudo H."/>
            <person name="Hosoiri T."/>
            <person name="Kaku Y."/>
            <person name="Kodaira H."/>
            <person name="Kondo H."/>
            <person name="Sugawara M."/>
            <person name="Takahashi M."/>
            <person name="Kanda K."/>
            <person name="Yokoi T."/>
            <person name="Furuya T."/>
            <person name="Kikkawa E."/>
            <person name="Omura Y."/>
            <person name="Abe K."/>
            <person name="Kamihara K."/>
            <person name="Katsuta N."/>
            <person name="Sato K."/>
            <person name="Tanikawa M."/>
            <person name="Yamazaki M."/>
            <person name="Ninomiya K."/>
            <person name="Ishibashi T."/>
            <person name="Yamashita H."/>
            <person name="Murakawa K."/>
            <person name="Fujimori K."/>
            <person name="Tanai H."/>
            <person name="Kimata M."/>
            <person name="Watanabe M."/>
            <person name="Hiraoka S."/>
            <person name="Chiba Y."/>
            <person name="Ishida S."/>
            <person name="Ono Y."/>
            <person name="Takiguchi S."/>
            <person name="Watanabe S."/>
            <person name="Yosida M."/>
            <person name="Hotuta T."/>
            <person name="Kusano J."/>
            <person name="Kanehori K."/>
            <person name="Takahashi-Fujii A."/>
            <person name="Hara H."/>
            <person name="Tanase T.-O."/>
            <person name="Nomura Y."/>
            <person name="Togiya S."/>
            <person name="Komai F."/>
            <person name="Hara R."/>
            <person name="Takeuchi K."/>
            <person name="Arita M."/>
            <person name="Imose N."/>
            <person name="Musashino K."/>
            <person name="Yuuki H."/>
            <person name="Oshima A."/>
            <person name="Sasaki N."/>
            <person name="Aotsuka S."/>
            <person name="Yoshikawa Y."/>
            <person name="Matsunawa H."/>
            <person name="Ichihara T."/>
            <person name="Shiohata N."/>
            <person name="Sano S."/>
            <person name="Moriya S."/>
            <person name="Momiyama H."/>
            <person name="Satoh N."/>
            <person name="Takami S."/>
            <person name="Terashima Y."/>
            <person name="Suzuki O."/>
            <person name="Nakagawa S."/>
            <person name="Senoh A."/>
            <person name="Mizoguchi H."/>
            <person name="Goto Y."/>
            <person name="Shimizu F."/>
            <person name="Wakebe H."/>
            <person name="Hishigaki H."/>
            <person name="Watanabe T."/>
            <person name="Sugiyama A."/>
            <person name="Takemoto M."/>
            <person name="Kawakami B."/>
            <person name="Yamazaki M."/>
            <person name="Watanabe K."/>
            <person name="Kumagai A."/>
            <person name="Itakura S."/>
            <person name="Fukuzumi Y."/>
            <person name="Fujimori Y."/>
            <person name="Komiyama M."/>
            <person name="Tashiro H."/>
            <person name="Tanigami A."/>
            <person name="Fujiwara T."/>
            <person name="Ono T."/>
            <person name="Yamada K."/>
            <person name="Fujii Y."/>
            <person name="Ozaki K."/>
            <person name="Hirao M."/>
            <person name="Ohmori Y."/>
            <person name="Kawabata A."/>
            <person name="Hikiji T."/>
            <person name="Kobatake N."/>
            <person name="Inagaki H."/>
            <person name="Ikema Y."/>
            <person name="Okamoto S."/>
            <person name="Okitani R."/>
            <person name="Kawakami T."/>
            <person name="Noguchi S."/>
            <person name="Itoh T."/>
            <person name="Shigeta K."/>
            <person name="Senba T."/>
            <person name="Matsumura K."/>
            <person name="Nakajima Y."/>
            <person name="Mizuno T."/>
            <person name="Morinaga M."/>
            <person name="Sasaki M."/>
            <person name="Togashi T."/>
            <person name="Oyama M."/>
            <person name="Hata H."/>
            <person name="Watanabe M."/>
            <person name="Komatsu T."/>
            <person name="Mizushima-Sugano J."/>
            <person name="Satoh T."/>
            <person name="Shirai Y."/>
            <person name="Takahashi Y."/>
            <person name="Nakagawa K."/>
            <person name="Okumura K."/>
            <person name="Nagase T."/>
            <person name="Nomura N."/>
            <person name="Kikuchi H."/>
            <person name="Masuho Y."/>
            <person name="Yamashita R."/>
            <person name="Nakai K."/>
            <person name="Yada T."/>
            <person name="Nakamura Y."/>
            <person name="Ohara O."/>
            <person name="Isogai T."/>
            <person name="Sugano S."/>
        </authorList>
    </citation>
    <scope>NUCLEOTIDE SEQUENCE [LARGE SCALE MRNA] (ISOFORM 1)</scope>
    <scope>VARIANT LEU-140</scope>
    <source>
        <tissue>Embryo</tissue>
        <tissue>Umbilical cord blood</tissue>
    </source>
</reference>
<reference key="5">
    <citation type="journal article" date="2004" name="Nature">
        <title>The DNA sequence and comparative analysis of human chromosome 5.</title>
        <authorList>
            <person name="Schmutz J."/>
            <person name="Martin J."/>
            <person name="Terry A."/>
            <person name="Couronne O."/>
            <person name="Grimwood J."/>
            <person name="Lowry S."/>
            <person name="Gordon L.A."/>
            <person name="Scott D."/>
            <person name="Xie G."/>
            <person name="Huang W."/>
            <person name="Hellsten U."/>
            <person name="Tran-Gyamfi M."/>
            <person name="She X."/>
            <person name="Prabhakar S."/>
            <person name="Aerts A."/>
            <person name="Altherr M."/>
            <person name="Bajorek E."/>
            <person name="Black S."/>
            <person name="Branscomb E."/>
            <person name="Caoile C."/>
            <person name="Challacombe J.F."/>
            <person name="Chan Y.M."/>
            <person name="Denys M."/>
            <person name="Detter J.C."/>
            <person name="Escobar J."/>
            <person name="Flowers D."/>
            <person name="Fotopulos D."/>
            <person name="Glavina T."/>
            <person name="Gomez M."/>
            <person name="Gonzales E."/>
            <person name="Goodstein D."/>
            <person name="Grigoriev I."/>
            <person name="Groza M."/>
            <person name="Hammon N."/>
            <person name="Hawkins T."/>
            <person name="Haydu L."/>
            <person name="Israni S."/>
            <person name="Jett J."/>
            <person name="Kadner K."/>
            <person name="Kimball H."/>
            <person name="Kobayashi A."/>
            <person name="Lopez F."/>
            <person name="Lou Y."/>
            <person name="Martinez D."/>
            <person name="Medina C."/>
            <person name="Morgan J."/>
            <person name="Nandkeshwar R."/>
            <person name="Noonan J.P."/>
            <person name="Pitluck S."/>
            <person name="Pollard M."/>
            <person name="Predki P."/>
            <person name="Priest J."/>
            <person name="Ramirez L."/>
            <person name="Retterer J."/>
            <person name="Rodriguez A."/>
            <person name="Rogers S."/>
            <person name="Salamov A."/>
            <person name="Salazar A."/>
            <person name="Thayer N."/>
            <person name="Tice H."/>
            <person name="Tsai M."/>
            <person name="Ustaszewska A."/>
            <person name="Vo N."/>
            <person name="Wheeler J."/>
            <person name="Wu K."/>
            <person name="Yang J."/>
            <person name="Dickson M."/>
            <person name="Cheng J.-F."/>
            <person name="Eichler E.E."/>
            <person name="Olsen A."/>
            <person name="Pennacchio L.A."/>
            <person name="Rokhsar D.S."/>
            <person name="Richardson P."/>
            <person name="Lucas S.M."/>
            <person name="Myers R.M."/>
            <person name="Rubin E.M."/>
        </authorList>
    </citation>
    <scope>NUCLEOTIDE SEQUENCE [LARGE SCALE GENOMIC DNA]</scope>
</reference>
<reference key="6">
    <citation type="submission" date="2005-09" db="EMBL/GenBank/DDBJ databases">
        <authorList>
            <person name="Mural R.J."/>
            <person name="Istrail S."/>
            <person name="Sutton G.G."/>
            <person name="Florea L."/>
            <person name="Halpern A.L."/>
            <person name="Mobarry C.M."/>
            <person name="Lippert R."/>
            <person name="Walenz B."/>
            <person name="Shatkay H."/>
            <person name="Dew I."/>
            <person name="Miller J.R."/>
            <person name="Flanigan M.J."/>
            <person name="Edwards N.J."/>
            <person name="Bolanos R."/>
            <person name="Fasulo D."/>
            <person name="Halldorsson B.V."/>
            <person name="Hannenhalli S."/>
            <person name="Turner R."/>
            <person name="Yooseph S."/>
            <person name="Lu F."/>
            <person name="Nusskern D.R."/>
            <person name="Shue B.C."/>
            <person name="Zheng X.H."/>
            <person name="Zhong F."/>
            <person name="Delcher A.L."/>
            <person name="Huson D.H."/>
            <person name="Kravitz S.A."/>
            <person name="Mouchard L."/>
            <person name="Reinert K."/>
            <person name="Remington K.A."/>
            <person name="Clark A.G."/>
            <person name="Waterman M.S."/>
            <person name="Eichler E.E."/>
            <person name="Adams M.D."/>
            <person name="Hunkapiller M.W."/>
            <person name="Myers E.W."/>
            <person name="Venter J.C."/>
        </authorList>
    </citation>
    <scope>NUCLEOTIDE SEQUENCE [LARGE SCALE GENOMIC DNA]</scope>
    <scope>VARIANT LEU-140</scope>
</reference>
<reference key="7">
    <citation type="journal article" date="2004" name="Genome Res.">
        <title>The status, quality, and expansion of the NIH full-length cDNA project: the Mammalian Gene Collection (MGC).</title>
        <authorList>
            <consortium name="The MGC Project Team"/>
        </authorList>
    </citation>
    <scope>NUCLEOTIDE SEQUENCE [LARGE SCALE MRNA] (ISOFORMS 1 AND 2)</scope>
    <scope>VARIANT LEU-140</scope>
    <source>
        <tissue>Lung</tissue>
        <tissue>Pancreas</tissue>
    </source>
</reference>
<reference key="8">
    <citation type="journal article" date="2003" name="Nat. Immunol.">
        <title>Tim-3 inhibits T helper type 1-mediated auto- and alloimmune responses and promotes immunological tolerance.</title>
        <authorList>
            <person name="Sanchez-Fueyo A."/>
            <person name="Tian J."/>
            <person name="Picarella D."/>
            <person name="Domenig C."/>
            <person name="Zheng X.X."/>
            <person name="Sabatos C.A."/>
            <person name="Manlongat N."/>
            <person name="Bender O."/>
            <person name="Kamradt T."/>
            <person name="Kuchroo V.K."/>
            <person name="Gutierrez-Ramos J.-C."/>
            <person name="Coyle A.J."/>
            <person name="Strom T.B."/>
        </authorList>
    </citation>
    <scope>FUNCTION</scope>
</reference>
<reference key="9">
    <citation type="journal article" date="2005" name="Nat. Immunol.">
        <title>The Tim-3 ligand galectin-9 negatively regulates T helper type 1 immunity.</title>
        <authorList>
            <person name="Zhu C."/>
            <person name="Anderson A.C."/>
            <person name="Schubart A."/>
            <person name="Xiong H."/>
            <person name="Imitola J."/>
            <person name="Khoury S.J."/>
            <person name="Zheng X.X."/>
            <person name="Strom T.B."/>
            <person name="Kuchroo V.K."/>
        </authorList>
    </citation>
    <scope>FUNCTION AS A RECEPTOR FOR LGALS9</scope>
</reference>
<reference key="10">
    <citation type="journal article" date="2006" name="Biochem. Biophys. Res. Commun.">
        <title>A highly conserved tyrosine of Tim-3 is phosphorylated upon stimulation by its ligand galectin-9.</title>
        <authorList>
            <person name="van de Weyer P.S."/>
            <person name="Muehlfeit M."/>
            <person name="Klose C."/>
            <person name="Bonventre J.V."/>
            <person name="Walz G."/>
            <person name="Kuehn E.W."/>
        </authorList>
    </citation>
    <scope>PHOSPHORYLATION AT TYR-265</scope>
    <scope>TISSUE SPECIFICITY</scope>
</reference>
<reference key="11">
    <citation type="journal article" date="2007" name="Science">
        <title>Promotion of tissue inflammation by the immune receptor Tim-3 expressed on innate immune cells.</title>
        <authorList>
            <person name="Anderson A.C."/>
            <person name="Anderson D.E."/>
            <person name="Bregoli L."/>
            <person name="Hastings W.D."/>
            <person name="Kassam N."/>
            <person name="Lei C."/>
            <person name="Chandwaskar R."/>
            <person name="Karman J."/>
            <person name="Su E.W."/>
            <person name="Hirashima M."/>
            <person name="Bruce J.N."/>
            <person name="Kane L.P."/>
            <person name="Kuchroo V.K."/>
            <person name="Hafler D.A."/>
        </authorList>
    </citation>
    <scope>TISSUE SPECIFICITY</scope>
</reference>
<reference key="12">
    <citation type="journal article" date="2008" name="J. Exp. Med.">
        <title>Tim-3 expression defines a novel population of dysfunctional T cells with highly elevated frequencies in progressive HIV-1 infection.</title>
        <authorList>
            <person name="Jones R.B."/>
            <person name="Ndhlovu L.C."/>
            <person name="Barbour J.D."/>
            <person name="Sheth P.M."/>
            <person name="Jha A.R."/>
            <person name="Long B.R."/>
            <person name="Wong J.C."/>
            <person name="Satkunarajah M."/>
            <person name="Schweneker M."/>
            <person name="Chapman J.M."/>
            <person name="Gyenes G."/>
            <person name="Vali B."/>
            <person name="Hyrcza M.D."/>
            <person name="Yue F.Y."/>
            <person name="Kovacs C."/>
            <person name="Sassi A."/>
            <person name="Loutfy M."/>
            <person name="Halpenny R."/>
            <person name="Persad D."/>
            <person name="Spotts G."/>
            <person name="Hecht F.M."/>
            <person name="Chun T.W."/>
            <person name="McCune J.M."/>
            <person name="Kaul R."/>
            <person name="Rini J.M."/>
            <person name="Nixon D.F."/>
            <person name="Ostrowski M.A."/>
        </authorList>
    </citation>
    <scope>INVOLVEMENT IN T-CELL EXHAUSTION</scope>
    <scope>TISSUE SPECIFICITY</scope>
</reference>
<reference key="13">
    <citation type="journal article" date="2009" name="J. Virol.">
        <title>Negative immune regulator Tim-3 is overexpressed on T cells in hepatitis C virus infection and its blockade rescues dysfunctional CD4+ and CD8+ T cells.</title>
        <authorList>
            <person name="Golden-Mason L."/>
            <person name="Palmer B.E."/>
            <person name="Kassam N."/>
            <person name="Townshend-Bulson L."/>
            <person name="Livingston S."/>
            <person name="McMahon B.J."/>
            <person name="Castelblanco N."/>
            <person name="Kuchroo V."/>
            <person name="Gretch D.R."/>
            <person name="Rosen H.R."/>
        </authorList>
    </citation>
    <scope>INVOLVEMENT IN T-CELL EXHAUSTION</scope>
    <scope>TISSUE SPECIFICITY</scope>
</reference>
<reference key="14">
    <citation type="journal article" date="2010" name="J. Immunol.">
        <title>T cell/transmembrane, Ig, and mucin-3 allelic variants differentially recognize phosphatidylserine and mediate phagocytosis of apoptotic cells.</title>
        <authorList>
            <person name="DeKruyff R.H."/>
            <person name="Bu X."/>
            <person name="Ballesteros A."/>
            <person name="Santpiago C."/>
            <person name="Chim Y.L."/>
            <person name="Lee H.H."/>
            <person name="Karisola P."/>
            <person name="Pichavant M."/>
            <person name="Kaplan G.G."/>
            <person name="Umetsu D.T."/>
            <person name="Freeman G.J."/>
            <person name="Casasnovas J.M."/>
        </authorList>
    </citation>
    <scope>PHOSPHATIDYLSERINE-BINDING</scope>
</reference>
<reference key="15">
    <citation type="journal article" date="2012" name="Mol. Cell. Proteomics">
        <title>Human urinary glycoproteomics; attachment site specific analysis of N- and O-linked glycosylations by CID and ECD.</title>
        <authorList>
            <person name="Halim A."/>
            <person name="Nilsson J."/>
            <person name="Ruetschi U."/>
            <person name="Hesse C."/>
            <person name="Larson G."/>
        </authorList>
    </citation>
    <scope>GLYCOSYLATION AT THR-145</scope>
    <scope>STRUCTURE OF CARBOHYDRATES</scope>
    <scope>IDENTIFICATION BY MASS SPECTROMETRY</scope>
</reference>
<reference key="16">
    <citation type="journal article" date="2012" name="Blood">
        <title>Tim-3 is an inducible human natural killer cell receptor that enhances interferon gamma production in response to galectin-9.</title>
        <authorList>
            <person name="Gleason M.K."/>
            <person name="Lenvik T.R."/>
            <person name="McCullar V."/>
            <person name="Felices M."/>
            <person name="O'Brien M.S."/>
            <person name="Cooley S.A."/>
            <person name="Verneris M.R."/>
            <person name="Cichocki F."/>
            <person name="Holman C.J."/>
            <person name="Panoskaltsis-Mortari A."/>
            <person name="Niki T."/>
            <person name="Hirashima M."/>
            <person name="Blazar B.R."/>
            <person name="Miller J.S."/>
        </authorList>
    </citation>
    <scope>FUNCTION</scope>
    <scope>TISSUE SPECIFICITY</scope>
</reference>
<reference key="17">
    <citation type="journal article" date="2012" name="Blood">
        <title>Tim-3 marks human natural killer cell maturation and suppresses cell-mediated cytotoxicity.</title>
        <authorList>
            <person name="Ndhlovu L.C."/>
            <person name="Lopez-Verges S."/>
            <person name="Barbour J.D."/>
            <person name="Jones R.B."/>
            <person name="Jha A.R."/>
            <person name="Long B.R."/>
            <person name="Schoeffler E.C."/>
            <person name="Fujita T."/>
            <person name="Nixon D.F."/>
            <person name="Lanier L.L."/>
        </authorList>
    </citation>
    <scope>FUNCTION</scope>
    <scope>TISSUE SPECIFICITY</scope>
</reference>
<reference key="18">
    <citation type="journal article" date="2013" name="PLoS Pathog.">
        <title>TIM-3 does not act as a receptor for galectin-9.</title>
        <authorList>
            <person name="Leitner J."/>
            <person name="Rieger A."/>
            <person name="Pickl W.F."/>
            <person name="Zlabinger G."/>
            <person name="Grabmeier-Pfistershammer K."/>
            <person name="Steinberger P."/>
        </authorList>
    </citation>
    <scope>FUNCTION AS A RECEPTOR FOR LGALS9</scope>
</reference>
<reference key="19">
    <citation type="journal article" date="2014" name="Eur. J. Immunol.">
        <title>Enhanced suppressor function of TIM-3+ FoxP3+ regulatory T cells.</title>
        <authorList>
            <person name="Gautron A.S."/>
            <person name="Dominguez-Villar M."/>
            <person name="de Marcken M."/>
            <person name="Hafler D.A."/>
        </authorList>
    </citation>
    <scope>FUNCTION</scope>
    <scope>TISSUE SPECIFICITY</scope>
</reference>
<reference key="20">
    <citation type="journal article" date="2014" name="Immunol. Res.">
        <title>Regulation of T cell responses by the receptor molecule Tim-3.</title>
        <authorList>
            <person name="Gorman J.V."/>
            <person name="Colgan J.D."/>
        </authorList>
    </citation>
    <scope>REVIEW ON FUNCTION IN REGULATING T-CELL RESPONSES</scope>
</reference>
<reference key="21">
    <citation type="journal article" date="2014" name="J. Immunol.">
        <title>T cell Ig and mucin domain-containing protein 3 is recruited to the immune synapse, disrupts stable synapse formation, and associates with receptor phosphatases.</title>
        <authorList>
            <person name="Clayton K.L."/>
            <person name="Haaland M.S."/>
            <person name="Douglas-Vail M.B."/>
            <person name="Mujib S."/>
            <person name="Chew G.M."/>
            <person name="Ndhlovu L.C."/>
            <person name="Ostrowski M.A."/>
        </authorList>
    </citation>
    <scope>SUBCELLULAR LOCATION</scope>
    <scope>INTERACTION WITH LGALS9 AND LCK</scope>
    <scope>PHOSPHORYLATION</scope>
</reference>
<reference key="22">
    <citation type="journal article" date="2015" name="PLoS ONE">
        <title>TIM-3 Suppresses Anti-CD3/CD28-Induced TCR Activation and IL-2 Expression through the NFAT Signaling Pathway.</title>
        <authorList>
            <person name="Tomkowicz B."/>
            <person name="Walsh E."/>
            <person name="Cotty A."/>
            <person name="Verona R."/>
            <person name="Sabins N."/>
            <person name="Kaplan F."/>
            <person name="Santulli-Marotto S."/>
            <person name="Chin C.N."/>
            <person name="Mooney J."/>
            <person name="Lingham R.B."/>
            <person name="Naso M."/>
            <person name="McCabe T."/>
        </authorList>
    </citation>
    <scope>FUNCTION</scope>
    <scope>INTERACTION WITH VAV1; AKT; LCP2; ZAP70; SYK; PIK3R1; FYN; SH3BP2 AND SH2D2A</scope>
    <scope>MUTAGENESIS OF TYR-265 AND TYR-272</scope>
</reference>
<reference key="23">
    <citation type="journal article" date="2018" name="Nat. Genet.">
        <title>Germline HAVCR2 mutations altering TIM-3 characterize subcutaneous panniculitis-like T cell lymphomas with hemophagocytic lymphohistiocytic syndrome.</title>
        <authorList>
            <person name="Gayden T."/>
            <person name="Sepulveda F.E."/>
            <person name="Khuong-Quang D.A."/>
            <person name="Pratt J."/>
            <person name="Valera E.T."/>
            <person name="Garrigue A."/>
            <person name="Kelso S."/>
            <person name="Sicheri F."/>
            <person name="Mikael L.G."/>
            <person name="Hamel N."/>
            <person name="Bajic A."/>
            <person name="Dali R."/>
            <person name="Deshmukh S."/>
            <person name="Dervovic D."/>
            <person name="Schramek D."/>
            <person name="Guerin F."/>
            <person name="Taipale M."/>
            <person name="Nikbakht H."/>
            <person name="Majewski J."/>
            <person name="Moshous D."/>
            <person name="Charlebois J."/>
            <person name="Abish S."/>
            <person name="Bole-Feysot C."/>
            <person name="Nitschke P."/>
            <person name="Bader-Meunier B."/>
            <person name="Mitchell D."/>
            <person name="Thieblemont C."/>
            <person name="Battistella M."/>
            <person name="Gravel S."/>
            <person name="Nguyen V.H."/>
            <person name="Conyers R."/>
            <person name="Diana J.S."/>
            <person name="McCormack C."/>
            <person name="Prince H.M."/>
            <person name="Besnard M."/>
            <person name="Blanche S."/>
            <person name="Ekert P.G."/>
            <person name="Fraitag S."/>
            <person name="Foulkes W.D."/>
            <person name="Fischer A."/>
            <person name="Neven B."/>
            <person name="Michonneau D."/>
            <person name="de Saint Basile G."/>
            <person name="Jabado N."/>
        </authorList>
    </citation>
    <scope>INVOLVEMENT IN SPTCL</scope>
    <scope>SUBCELLULAR LOCATION</scope>
    <scope>VARIANTS SPTCL CYS-82 AND MET-97</scope>
    <scope>CHARACTERIZATION OF VARIANTS SPTCL CYS-82 AND MET-97</scope>
</reference>
<reference key="24">
    <citation type="journal article" date="2019" name="Nat. Genet.">
        <authorList>
            <person name="Gayden T."/>
            <person name="Sepulveda F.E."/>
            <person name="Khuong-Quang D.A."/>
            <person name="Pratt J."/>
            <person name="Valera E.T."/>
            <person name="Garrigue A."/>
            <person name="Kelso S."/>
            <person name="Sicheri F."/>
            <person name="Mikael L.G."/>
            <person name="Hamel N."/>
            <person name="Bajic A."/>
            <person name="Dali R."/>
            <person name="Deshmukh S."/>
            <person name="Dervovic D."/>
            <person name="Schramek D."/>
            <person name="Guerin F."/>
            <person name="Taipale M."/>
            <person name="Nikbakht H."/>
            <person name="Majewski J."/>
            <person name="Moshous D."/>
            <person name="Charlebois J."/>
            <person name="Abish S."/>
            <person name="Bole-Feysot C."/>
            <person name="Nitschke P."/>
            <person name="Bader-Meunier B."/>
            <person name="Mitchell D."/>
            <person name="Thieblemont C."/>
            <person name="Battistella M."/>
            <person name="Gravel S."/>
            <person name="Nguyen V.H."/>
            <person name="Conyers R."/>
            <person name="Diana J.S."/>
            <person name="McCormack C."/>
            <person name="Prince H.M."/>
            <person name="Besnard M."/>
            <person name="Blanche S."/>
            <person name="Ekert P.G."/>
            <person name="Fraitag S."/>
            <person name="Foulkes W.D."/>
            <person name="Fischer A."/>
            <person name="Neven B."/>
            <person name="Michonneau D."/>
            <person name="de Saint Basile G."/>
            <person name="Jabado N."/>
        </authorList>
    </citation>
    <scope>ERRATUM OF PUBMED:30374066</scope>
</reference>
<reference key="25">
    <citation type="journal article" date="2021" name="Elife">
        <title>Ubiquitination and degradation of NF90 by Tim-3 inhibits antiviral innate immunity.</title>
        <authorList>
            <person name="Dou S."/>
            <person name="Li G."/>
            <person name="Li G."/>
            <person name="Hou C."/>
            <person name="Zheng Y."/>
            <person name="Tang L."/>
            <person name="Gao Y."/>
            <person name="Mo R."/>
            <person name="Li Y."/>
            <person name="Wang R."/>
            <person name="Shen B."/>
            <person name="Zhang J."/>
            <person name="Han G."/>
        </authorList>
    </citation>
    <scope>INTERACTION WITH ILF3</scope>
</reference>
<reference key="26">
    <citation type="journal article" date="2024" name="Sci. Immunol.">
        <title>Palmitoylation of TIM-3 promotes immune exhaustion and restrains antitumor immunity.</title>
        <authorList>
            <person name="Zhang Z."/>
            <person name="Ren C."/>
            <person name="Xiao R."/>
            <person name="Ma S."/>
            <person name="Liu H."/>
            <person name="Dou Y."/>
            <person name="Fan Y."/>
            <person name="Wang S."/>
            <person name="Zhan P."/>
            <person name="Gao C."/>
            <person name="Yue X."/>
            <person name="Li C."/>
            <person name="Gao L."/>
            <person name="Liang X."/>
            <person name="Wu Z."/>
            <person name="Ma C."/>
        </authorList>
    </citation>
    <scope>PALMITOYLATION AT CYS-296</scope>
    <scope>SUBCELLULAR LOCATION</scope>
    <scope>MUTAGENESIS OF CYS-296</scope>
</reference>
<reference key="27">
    <citation type="journal article" date="2019" name="Blood Adv.">
        <title>Frequent germline mutations of HAVCR2 in sporadic subcutaneous panniculitis-like T-cell lymphoma.</title>
        <authorList>
            <person name="Polprasert C."/>
            <person name="Takeuchi Y."/>
            <person name="Kakiuchi N."/>
            <person name="Yoshida K."/>
            <person name="Assanasen T."/>
            <person name="Sitthi W."/>
            <person name="Bunworasate U."/>
            <person name="Pirunsarn A."/>
            <person name="Wudhikarn K."/>
            <person name="Lawasut P."/>
            <person name="Uaprasert N."/>
            <person name="Kongkiatkamon S."/>
            <person name="Moonla C."/>
            <person name="Sanada M."/>
            <person name="Akita N."/>
            <person name="Takeda J."/>
            <person name="Fujii Y."/>
            <person name="Suzuki H."/>
            <person name="Nannya Y."/>
            <person name="Shiraishi Y."/>
            <person name="Chiba K."/>
            <person name="Tanaka H."/>
            <person name="Miyano S."/>
            <person name="Rojnuckarin P."/>
            <person name="Ogawa S."/>
            <person name="Makishima H."/>
        </authorList>
    </citation>
    <scope>INVOLVEMENT IN SPTCL</scope>
    <scope>VARIANTS SPTCL CYS-82 AND ILE-101</scope>
</reference>
<dbReference type="EMBL" id="AF251707">
    <property type="protein sequence ID" value="AAM19100.1"/>
    <property type="molecule type" value="mRNA"/>
</dbReference>
<dbReference type="EMBL" id="AY069944">
    <property type="protein sequence ID" value="AAL55401.1"/>
    <property type="molecule type" value="mRNA"/>
</dbReference>
<dbReference type="EMBL" id="AK027334">
    <property type="protein sequence ID" value="BAB55044.1"/>
    <property type="molecule type" value="mRNA"/>
</dbReference>
<dbReference type="EMBL" id="AK314406">
    <property type="protein sequence ID" value="BAG37029.1"/>
    <property type="molecule type" value="mRNA"/>
</dbReference>
<dbReference type="EMBL" id="AC011377">
    <property type="status" value="NOT_ANNOTATED_CDS"/>
    <property type="molecule type" value="Genomic_DNA"/>
</dbReference>
<dbReference type="EMBL" id="CH471062">
    <property type="protein sequence ID" value="EAW61614.1"/>
    <property type="molecule type" value="Genomic_DNA"/>
</dbReference>
<dbReference type="EMBL" id="BC020843">
    <property type="protein sequence ID" value="AAH20843.1"/>
    <property type="molecule type" value="mRNA"/>
</dbReference>
<dbReference type="EMBL" id="BC063431">
    <property type="protein sequence ID" value="AAH63431.1"/>
    <property type="molecule type" value="mRNA"/>
</dbReference>
<dbReference type="CCDS" id="CCDS4333.1">
    <molecule id="Q8TDQ0-1"/>
</dbReference>
<dbReference type="RefSeq" id="NP_116171.3">
    <molecule id="Q8TDQ0-1"/>
    <property type="nucleotide sequence ID" value="NM_032782.4"/>
</dbReference>
<dbReference type="PDB" id="5DZL">
    <property type="method" value="X-ray"/>
    <property type="resolution" value="3.40 A"/>
    <property type="chains" value="A/B=22-126"/>
</dbReference>
<dbReference type="PDB" id="5F71">
    <property type="method" value="X-ray"/>
    <property type="resolution" value="2.40 A"/>
    <property type="chains" value="A/B=22-130"/>
</dbReference>
<dbReference type="PDB" id="6DHB">
    <property type="method" value="X-ray"/>
    <property type="resolution" value="1.70 A"/>
    <property type="chains" value="A=24-130"/>
</dbReference>
<dbReference type="PDB" id="6TXZ">
    <property type="method" value="X-ray"/>
    <property type="resolution" value="3.06 A"/>
    <property type="chains" value="A/B/C/D=22-130"/>
</dbReference>
<dbReference type="PDB" id="7KQL">
    <property type="method" value="X-ray"/>
    <property type="resolution" value="1.49 A"/>
    <property type="chains" value="T=13-132"/>
</dbReference>
<dbReference type="PDB" id="7M3Y">
    <property type="method" value="X-ray"/>
    <property type="resolution" value="1.69 A"/>
    <property type="chains" value="B=22-130"/>
</dbReference>
<dbReference type="PDB" id="7M3Z">
    <property type="method" value="X-ray"/>
    <property type="resolution" value="1.40 A"/>
    <property type="chains" value="A=22-130"/>
</dbReference>
<dbReference type="PDB" id="7M41">
    <property type="method" value="X-ray"/>
    <property type="resolution" value="1.79 A"/>
    <property type="chains" value="A/B=22-130"/>
</dbReference>
<dbReference type="PDB" id="8HGJ">
    <property type="method" value="EM"/>
    <property type="resolution" value="4.82 A"/>
    <property type="chains" value="B=24-130"/>
</dbReference>
<dbReference type="PDB" id="8TBB">
    <property type="method" value="X-ray"/>
    <property type="resolution" value="2.50 A"/>
    <property type="chains" value="D=22-131"/>
</dbReference>
<dbReference type="PDB" id="8TFT">
    <property type="method" value="X-ray"/>
    <property type="resolution" value="2.30 A"/>
    <property type="chains" value="F/G=22-130"/>
</dbReference>
<dbReference type="PDBsum" id="5DZL"/>
<dbReference type="PDBsum" id="5F71"/>
<dbReference type="PDBsum" id="6DHB"/>
<dbReference type="PDBsum" id="6TXZ"/>
<dbReference type="PDBsum" id="7KQL"/>
<dbReference type="PDBsum" id="7M3Y"/>
<dbReference type="PDBsum" id="7M3Z"/>
<dbReference type="PDBsum" id="7M41"/>
<dbReference type="PDBsum" id="8HGJ"/>
<dbReference type="PDBsum" id="8TBB"/>
<dbReference type="PDBsum" id="8TFT"/>
<dbReference type="EMDB" id="EMD-34740"/>
<dbReference type="SMR" id="Q8TDQ0"/>
<dbReference type="BioGRID" id="124313">
    <property type="interactions" value="83"/>
</dbReference>
<dbReference type="DIP" id="DIP-61459N"/>
<dbReference type="FunCoup" id="Q8TDQ0">
    <property type="interactions" value="298"/>
</dbReference>
<dbReference type="IntAct" id="Q8TDQ0">
    <property type="interactions" value="90"/>
</dbReference>
<dbReference type="STRING" id="9606.ENSP00000312002"/>
<dbReference type="BindingDB" id="Q8TDQ0"/>
<dbReference type="ChEMBL" id="CHEMBL4630879"/>
<dbReference type="GuidetoPHARMACOLOGY" id="2940"/>
<dbReference type="GlyConnect" id="712">
    <property type="glycosylation" value="5 O-Linked glycans (1 site)"/>
</dbReference>
<dbReference type="GlyCosmos" id="Q8TDQ0">
    <property type="glycosylation" value="4 sites, 6 glycans"/>
</dbReference>
<dbReference type="GlyGen" id="Q8TDQ0">
    <property type="glycosylation" value="5 sites, 5 O-linked glycans (4 sites)"/>
</dbReference>
<dbReference type="iPTMnet" id="Q8TDQ0"/>
<dbReference type="PhosphoSitePlus" id="Q8TDQ0"/>
<dbReference type="BioMuta" id="HAVCR2"/>
<dbReference type="DMDM" id="311033536"/>
<dbReference type="CPTAC" id="CPTAC-5984"/>
<dbReference type="MassIVE" id="Q8TDQ0"/>
<dbReference type="PaxDb" id="9606-ENSP00000312002"/>
<dbReference type="PeptideAtlas" id="Q8TDQ0"/>
<dbReference type="ProteomicsDB" id="74319">
    <molecule id="Q8TDQ0-1"/>
</dbReference>
<dbReference type="ProteomicsDB" id="74320">
    <molecule id="Q8TDQ0-2"/>
</dbReference>
<dbReference type="ABCD" id="Q8TDQ0">
    <property type="antibodies" value="18 sequenced antibodies"/>
</dbReference>
<dbReference type="Antibodypedia" id="2450">
    <property type="antibodies" value="1529 antibodies from 48 providers"/>
</dbReference>
<dbReference type="CPTC" id="Q8TDQ0">
    <property type="antibodies" value="3 antibodies"/>
</dbReference>
<dbReference type="DNASU" id="84868"/>
<dbReference type="Ensembl" id="ENST00000307851.9">
    <molecule id="Q8TDQ0-1"/>
    <property type="protein sequence ID" value="ENSP00000312002.4"/>
    <property type="gene ID" value="ENSG00000135077.10"/>
</dbReference>
<dbReference type="Ensembl" id="ENST00000696899.1">
    <molecule id="Q8TDQ0-1"/>
    <property type="protein sequence ID" value="ENSP00000512960.1"/>
    <property type="gene ID" value="ENSG00000135077.10"/>
</dbReference>
<dbReference type="GeneID" id="84868"/>
<dbReference type="KEGG" id="hsa:84868"/>
<dbReference type="MANE-Select" id="ENST00000307851.9">
    <property type="protein sequence ID" value="ENSP00000312002.4"/>
    <property type="RefSeq nucleotide sequence ID" value="NM_032782.5"/>
    <property type="RefSeq protein sequence ID" value="NP_116171.3"/>
</dbReference>
<dbReference type="UCSC" id="uc003lwk.3">
    <molecule id="Q8TDQ0-1"/>
    <property type="organism name" value="human"/>
</dbReference>
<dbReference type="AGR" id="HGNC:18437"/>
<dbReference type="CTD" id="84868"/>
<dbReference type="DisGeNET" id="84868"/>
<dbReference type="GeneCards" id="HAVCR2"/>
<dbReference type="HGNC" id="HGNC:18437">
    <property type="gene designation" value="HAVCR2"/>
</dbReference>
<dbReference type="HPA" id="ENSG00000135077">
    <property type="expression patterns" value="Low tissue specificity"/>
</dbReference>
<dbReference type="MalaCards" id="HAVCR2"/>
<dbReference type="MIM" id="606652">
    <property type="type" value="gene"/>
</dbReference>
<dbReference type="MIM" id="618398">
    <property type="type" value="phenotype"/>
</dbReference>
<dbReference type="neXtProt" id="NX_Q8TDQ0"/>
<dbReference type="OpenTargets" id="ENSG00000135077"/>
<dbReference type="Orphanet" id="86884">
    <property type="disease" value="Subcutaneous panniculitis-like T-cell lymphoma"/>
</dbReference>
<dbReference type="PharmGKB" id="PA134883425"/>
<dbReference type="VEuPathDB" id="HostDB:ENSG00000135077"/>
<dbReference type="eggNOG" id="ENOG502S454">
    <property type="taxonomic scope" value="Eukaryota"/>
</dbReference>
<dbReference type="GeneTree" id="ENSGT00940000154444"/>
<dbReference type="InParanoid" id="Q8TDQ0"/>
<dbReference type="OMA" id="EHGPAET"/>
<dbReference type="OrthoDB" id="434099at2759"/>
<dbReference type="PAN-GO" id="Q8TDQ0">
    <property type="GO annotations" value="0 GO annotations based on evolutionary models"/>
</dbReference>
<dbReference type="PhylomeDB" id="Q8TDQ0"/>
<dbReference type="TreeFam" id="TF336163"/>
<dbReference type="PathwayCommons" id="Q8TDQ0"/>
<dbReference type="Reactome" id="R-HSA-451927">
    <property type="pathway name" value="Interleukin-2 family signaling"/>
</dbReference>
<dbReference type="SignaLink" id="Q8TDQ0"/>
<dbReference type="SIGNOR" id="Q8TDQ0"/>
<dbReference type="BioGRID-ORCS" id="84868">
    <property type="hits" value="11 hits in 1152 CRISPR screens"/>
</dbReference>
<dbReference type="ChiTaRS" id="HAVCR2">
    <property type="organism name" value="human"/>
</dbReference>
<dbReference type="EvolutionaryTrace" id="Q8TDQ0"/>
<dbReference type="GeneWiki" id="HAVCR2"/>
<dbReference type="GenomeRNAi" id="84868"/>
<dbReference type="Pharos" id="Q8TDQ0">
    <property type="development level" value="Tchem"/>
</dbReference>
<dbReference type="PRO" id="PR:Q8TDQ0"/>
<dbReference type="Proteomes" id="UP000005640">
    <property type="component" value="Chromosome 5"/>
</dbReference>
<dbReference type="RNAct" id="Q8TDQ0">
    <property type="molecule type" value="protein"/>
</dbReference>
<dbReference type="Bgee" id="ENSG00000135077">
    <property type="expression patterns" value="Expressed in granulocyte and 145 other cell types or tissues"/>
</dbReference>
<dbReference type="ExpressionAtlas" id="Q8TDQ0">
    <property type="expression patterns" value="baseline and differential"/>
</dbReference>
<dbReference type="GO" id="GO:0070161">
    <property type="term" value="C:anchoring junction"/>
    <property type="evidence" value="ECO:0007669"/>
    <property type="project" value="UniProtKB-SubCell"/>
</dbReference>
<dbReference type="GO" id="GO:0009986">
    <property type="term" value="C:cell surface"/>
    <property type="evidence" value="ECO:0000314"/>
    <property type="project" value="UniProtKB"/>
</dbReference>
<dbReference type="GO" id="GO:0005769">
    <property type="term" value="C:early endosome"/>
    <property type="evidence" value="ECO:0007669"/>
    <property type="project" value="Ensembl"/>
</dbReference>
<dbReference type="GO" id="GO:0001772">
    <property type="term" value="C:immunological synapse"/>
    <property type="evidence" value="ECO:0007669"/>
    <property type="project" value="Ensembl"/>
</dbReference>
<dbReference type="GO" id="GO:0016592">
    <property type="term" value="C:mediator complex"/>
    <property type="evidence" value="ECO:0000318"/>
    <property type="project" value="GO_Central"/>
</dbReference>
<dbReference type="GO" id="GO:0005886">
    <property type="term" value="C:plasma membrane"/>
    <property type="evidence" value="ECO:0000314"/>
    <property type="project" value="UniProt"/>
</dbReference>
<dbReference type="GO" id="GO:0046872">
    <property type="term" value="F:metal ion binding"/>
    <property type="evidence" value="ECO:0007669"/>
    <property type="project" value="UniProtKB-KW"/>
</dbReference>
<dbReference type="GO" id="GO:0004888">
    <property type="term" value="F:transmembrane signaling receptor activity"/>
    <property type="evidence" value="ECO:0000314"/>
    <property type="project" value="UniProt"/>
</dbReference>
<dbReference type="GO" id="GO:0002250">
    <property type="term" value="P:adaptive immune response"/>
    <property type="evidence" value="ECO:0007669"/>
    <property type="project" value="UniProtKB-KW"/>
</dbReference>
<dbReference type="GO" id="GO:0071222">
    <property type="term" value="P:cellular response to lipopolysaccharide"/>
    <property type="evidence" value="ECO:0007669"/>
    <property type="project" value="Ensembl"/>
</dbReference>
<dbReference type="GO" id="GO:0050830">
    <property type="term" value="P:defense response to Gram-positive bacterium"/>
    <property type="evidence" value="ECO:0007669"/>
    <property type="project" value="Ensembl"/>
</dbReference>
<dbReference type="GO" id="GO:0006954">
    <property type="term" value="P:inflammatory response"/>
    <property type="evidence" value="ECO:0007669"/>
    <property type="project" value="UniProtKB-KW"/>
</dbReference>
<dbReference type="GO" id="GO:0045087">
    <property type="term" value="P:innate immune response"/>
    <property type="evidence" value="ECO:0007669"/>
    <property type="project" value="UniProtKB-KW"/>
</dbReference>
<dbReference type="GO" id="GO:0002281">
    <property type="term" value="P:macrophage activation involved in immune response"/>
    <property type="evidence" value="ECO:0007669"/>
    <property type="project" value="Ensembl"/>
</dbReference>
<dbReference type="GO" id="GO:0060135">
    <property type="term" value="P:maternal process involved in female pregnancy"/>
    <property type="evidence" value="ECO:0000314"/>
    <property type="project" value="UniProtKB"/>
</dbReference>
<dbReference type="GO" id="GO:0002519">
    <property type="term" value="P:natural killer cell tolerance induction"/>
    <property type="evidence" value="ECO:0000315"/>
    <property type="project" value="UniProtKB"/>
</dbReference>
<dbReference type="GO" id="GO:1900425">
    <property type="term" value="P:negative regulation of defense response to bacterium"/>
    <property type="evidence" value="ECO:0007669"/>
    <property type="project" value="Ensembl"/>
</dbReference>
<dbReference type="GO" id="GO:0010629">
    <property type="term" value="P:negative regulation of gene expression"/>
    <property type="evidence" value="ECO:0000315"/>
    <property type="project" value="UniProtKB"/>
</dbReference>
<dbReference type="GO" id="GO:0071656">
    <property type="term" value="P:negative regulation of granulocyte colony-stimulating factor production"/>
    <property type="evidence" value="ECO:0000314"/>
    <property type="project" value="UniProtKB"/>
</dbReference>
<dbReference type="GO" id="GO:2000521">
    <property type="term" value="P:negative regulation of immunological synapse formation"/>
    <property type="evidence" value="ECO:0007669"/>
    <property type="project" value="Ensembl"/>
</dbReference>
<dbReference type="GO" id="GO:0032687">
    <property type="term" value="P:negative regulation of interferon-alpha production"/>
    <property type="evidence" value="ECO:0000314"/>
    <property type="project" value="UniProtKB"/>
</dbReference>
<dbReference type="GO" id="GO:0032703">
    <property type="term" value="P:negative regulation of interleukin-2 production"/>
    <property type="evidence" value="ECO:0000314"/>
    <property type="project" value="UniProtKB"/>
</dbReference>
<dbReference type="GO" id="GO:0032712">
    <property type="term" value="P:negative regulation of interleukin-3 production"/>
    <property type="evidence" value="ECO:0000314"/>
    <property type="project" value="UniProtKB"/>
</dbReference>
<dbReference type="GO" id="GO:0032715">
    <property type="term" value="P:negative regulation of interleukin-6 production"/>
    <property type="evidence" value="ECO:0007669"/>
    <property type="project" value="Ensembl"/>
</dbReference>
<dbReference type="GO" id="GO:0030886">
    <property type="term" value="P:negative regulation of myeloid dendritic cell activation"/>
    <property type="evidence" value="ECO:0000315"/>
    <property type="project" value="UniProtKB"/>
</dbReference>
<dbReference type="GO" id="GO:0032815">
    <property type="term" value="P:negative regulation of natural killer cell activation"/>
    <property type="evidence" value="ECO:0007669"/>
    <property type="project" value="Ensembl"/>
</dbReference>
<dbReference type="GO" id="GO:0002859">
    <property type="term" value="P:negative regulation of natural killer cell mediated cytotoxicity directed against tumor cell target"/>
    <property type="evidence" value="ECO:0007669"/>
    <property type="project" value="Ensembl"/>
</dbReference>
<dbReference type="GO" id="GO:0032088">
    <property type="term" value="P:negative regulation of NF-kappaB transcription factor activity"/>
    <property type="evidence" value="ECO:0000315"/>
    <property type="project" value="UniProtKB"/>
</dbReference>
<dbReference type="GO" id="GO:2001189">
    <property type="term" value="P:negative regulation of T cell activation via T cell receptor contact with antigen bound to MHC molecule on antigen presenting cell"/>
    <property type="evidence" value="ECO:0000314"/>
    <property type="project" value="UniProtKB"/>
</dbReference>
<dbReference type="GO" id="GO:0042130">
    <property type="term" value="P:negative regulation of T cell proliferation"/>
    <property type="evidence" value="ECO:0007669"/>
    <property type="project" value="Ensembl"/>
</dbReference>
<dbReference type="GO" id="GO:0002826">
    <property type="term" value="P:negative regulation of T-helper 1 type immune response"/>
    <property type="evidence" value="ECO:0000314"/>
    <property type="project" value="UniProt"/>
</dbReference>
<dbReference type="GO" id="GO:0032720">
    <property type="term" value="P:negative regulation of tumor necrosis factor production"/>
    <property type="evidence" value="ECO:0000315"/>
    <property type="project" value="UniProtKB"/>
</dbReference>
<dbReference type="GO" id="GO:0032689">
    <property type="term" value="P:negative regulation of type II interferon production"/>
    <property type="evidence" value="ECO:0000314"/>
    <property type="project" value="UniProtKB"/>
</dbReference>
<dbReference type="GO" id="GO:0032722">
    <property type="term" value="P:positive regulation of chemokine production"/>
    <property type="evidence" value="ECO:0007669"/>
    <property type="project" value="Ensembl"/>
</dbReference>
<dbReference type="GO" id="GO:1900426">
    <property type="term" value="P:positive regulation of defense response to bacterium"/>
    <property type="evidence" value="ECO:0007669"/>
    <property type="project" value="Ensembl"/>
</dbReference>
<dbReference type="GO" id="GO:0070374">
    <property type="term" value="P:positive regulation of ERK1 and ERK2 cascade"/>
    <property type="evidence" value="ECO:0007669"/>
    <property type="project" value="Ensembl"/>
</dbReference>
<dbReference type="GO" id="GO:0032732">
    <property type="term" value="P:positive regulation of interleukin-1 production"/>
    <property type="evidence" value="ECO:0007669"/>
    <property type="project" value="Ensembl"/>
</dbReference>
<dbReference type="GO" id="GO:0032753">
    <property type="term" value="P:positive regulation of interleukin-4 production"/>
    <property type="evidence" value="ECO:0000315"/>
    <property type="project" value="UniProtKB"/>
</dbReference>
<dbReference type="GO" id="GO:0043032">
    <property type="term" value="P:positive regulation of macrophage activation"/>
    <property type="evidence" value="ECO:0007669"/>
    <property type="project" value="Ensembl"/>
</dbReference>
<dbReference type="GO" id="GO:1901224">
    <property type="term" value="P:positive regulation of non-canonical NF-kappaB signal transduction"/>
    <property type="evidence" value="ECO:0007669"/>
    <property type="project" value="Ensembl"/>
</dbReference>
<dbReference type="GO" id="GO:0042102">
    <property type="term" value="P:positive regulation of T cell proliferation"/>
    <property type="evidence" value="ECO:0007669"/>
    <property type="project" value="Ensembl"/>
</dbReference>
<dbReference type="GO" id="GO:0032760">
    <property type="term" value="P:positive regulation of tumor necrosis factor production"/>
    <property type="evidence" value="ECO:0000315"/>
    <property type="project" value="UniProtKB"/>
</dbReference>
<dbReference type="GO" id="GO:0032729">
    <property type="term" value="P:positive regulation of type II interferon production"/>
    <property type="evidence" value="ECO:0007669"/>
    <property type="project" value="Ensembl"/>
</dbReference>
<dbReference type="GO" id="GO:0002652">
    <property type="term" value="P:regulation of tolerance induction dependent upon immune response"/>
    <property type="evidence" value="ECO:0007669"/>
    <property type="project" value="Ensembl"/>
</dbReference>
<dbReference type="GO" id="GO:0006357">
    <property type="term" value="P:regulation of transcription by RNA polymerase II"/>
    <property type="evidence" value="ECO:0000318"/>
    <property type="project" value="GO_Central"/>
</dbReference>
<dbReference type="GO" id="GO:0034138">
    <property type="term" value="P:toll-like receptor 3 signaling pathway"/>
    <property type="evidence" value="ECO:0007669"/>
    <property type="project" value="Ensembl"/>
</dbReference>
<dbReference type="GO" id="GO:0034154">
    <property type="term" value="P:toll-like receptor 7 signaling pathway"/>
    <property type="evidence" value="ECO:0007669"/>
    <property type="project" value="Ensembl"/>
</dbReference>
<dbReference type="GO" id="GO:0034162">
    <property type="term" value="P:toll-like receptor 9 signaling pathway"/>
    <property type="evidence" value="ECO:0007669"/>
    <property type="project" value="Ensembl"/>
</dbReference>
<dbReference type="CDD" id="cd20982">
    <property type="entry name" value="IgV_TIM-3_like"/>
    <property type="match status" value="1"/>
</dbReference>
<dbReference type="FunFam" id="2.60.40.10:FF:000774">
    <property type="entry name" value="Hepatitis A virus cellular receptor 1"/>
    <property type="match status" value="1"/>
</dbReference>
<dbReference type="Gene3D" id="2.60.40.10">
    <property type="entry name" value="Immunoglobulins"/>
    <property type="match status" value="1"/>
</dbReference>
<dbReference type="InterPro" id="IPR007110">
    <property type="entry name" value="Ig-like_dom"/>
</dbReference>
<dbReference type="InterPro" id="IPR036179">
    <property type="entry name" value="Ig-like_dom_sf"/>
</dbReference>
<dbReference type="InterPro" id="IPR013783">
    <property type="entry name" value="Ig-like_fold"/>
</dbReference>
<dbReference type="InterPro" id="IPR003599">
    <property type="entry name" value="Ig_sub"/>
</dbReference>
<dbReference type="InterPro" id="IPR013106">
    <property type="entry name" value="Ig_V-set"/>
</dbReference>
<dbReference type="InterPro" id="IPR051669">
    <property type="entry name" value="Immune_Mod/Transcr_Coactivator"/>
</dbReference>
<dbReference type="PANTHER" id="PTHR15498:SF73">
    <property type="entry name" value="HEPATITIS A VIRUS CELLULAR RECEPTOR 2"/>
    <property type="match status" value="1"/>
</dbReference>
<dbReference type="PANTHER" id="PTHR15498">
    <property type="entry name" value="T-CELL IMMUNOGLOBULIN AND MUCIN DOMAIN CONTAINING TIM"/>
    <property type="match status" value="1"/>
</dbReference>
<dbReference type="Pfam" id="PF07686">
    <property type="entry name" value="V-set"/>
    <property type="match status" value="1"/>
</dbReference>
<dbReference type="SMART" id="SM00409">
    <property type="entry name" value="IG"/>
    <property type="match status" value="1"/>
</dbReference>
<dbReference type="SUPFAM" id="SSF48726">
    <property type="entry name" value="Immunoglobulin"/>
    <property type="match status" value="1"/>
</dbReference>
<dbReference type="PROSITE" id="PS50835">
    <property type="entry name" value="IG_LIKE"/>
    <property type="match status" value="1"/>
</dbReference>
<evidence type="ECO:0000250" key="1">
    <source>
        <dbReference type="UniProtKB" id="Q8VIM0"/>
    </source>
</evidence>
<evidence type="ECO:0000255" key="2"/>
<evidence type="ECO:0000255" key="3">
    <source>
        <dbReference type="PROSITE-ProRule" id="PRU00114"/>
    </source>
</evidence>
<evidence type="ECO:0000269" key="4">
    <source>
    </source>
</evidence>
<evidence type="ECO:0000269" key="5">
    <source>
    </source>
</evidence>
<evidence type="ECO:0000269" key="6">
    <source>
    </source>
</evidence>
<evidence type="ECO:0000269" key="7">
    <source>
    </source>
</evidence>
<evidence type="ECO:0000269" key="8">
    <source>
    </source>
</evidence>
<evidence type="ECO:0000269" key="9">
    <source>
    </source>
</evidence>
<evidence type="ECO:0000269" key="10">
    <source>
    </source>
</evidence>
<evidence type="ECO:0000269" key="11">
    <source>
    </source>
</evidence>
<evidence type="ECO:0000269" key="12">
    <source>
    </source>
</evidence>
<evidence type="ECO:0000269" key="13">
    <source>
    </source>
</evidence>
<evidence type="ECO:0000269" key="14">
    <source>
    </source>
</evidence>
<evidence type="ECO:0000269" key="15">
    <source>
    </source>
</evidence>
<evidence type="ECO:0000269" key="16">
    <source>
    </source>
</evidence>
<evidence type="ECO:0000269" key="17">
    <source>
    </source>
</evidence>
<evidence type="ECO:0000269" key="18">
    <source>
    </source>
</evidence>
<evidence type="ECO:0000269" key="19">
    <source>
    </source>
</evidence>
<evidence type="ECO:0000269" key="20">
    <source>
    </source>
</evidence>
<evidence type="ECO:0000269" key="21">
    <source>
    </source>
</evidence>
<evidence type="ECO:0000269" key="22">
    <source>
    </source>
</evidence>
<evidence type="ECO:0000269" key="23">
    <source>
    </source>
</evidence>
<evidence type="ECO:0000269" key="24">
    <source ref="2"/>
</evidence>
<evidence type="ECO:0000269" key="25">
    <source ref="3"/>
</evidence>
<evidence type="ECO:0000269" key="26">
    <source ref="6"/>
</evidence>
<evidence type="ECO:0000303" key="27">
    <source>
    </source>
</evidence>
<evidence type="ECO:0000305" key="28"/>
<evidence type="ECO:0000305" key="29">
    <source>
    </source>
</evidence>
<evidence type="ECO:0007829" key="30">
    <source>
        <dbReference type="PDB" id="5F71"/>
    </source>
</evidence>
<evidence type="ECO:0007829" key="31">
    <source>
        <dbReference type="PDB" id="7KQL"/>
    </source>
</evidence>
<evidence type="ECO:0007829" key="32">
    <source>
        <dbReference type="PDB" id="7M3Z"/>
    </source>
</evidence>
<comment type="function">
    <text evidence="1 4 5 8 14 16 18 19 20 29">Cell surface receptor implicated in modulating innate and adaptive immune responses. Generally accepted to have an inhibiting function. Reports on stimulating functions suggest that the activity may be influenced by the cellular context and/or the respective ligand (PubMed:24825777). Regulates macrophage activation (PubMed:11823861). Inhibits T-helper type 1 lymphocyte (Th1)-mediated auto- and alloimmune responses and promotes immunological tolerance (PubMed:14556005). In CD8+ cells attenuates TCR-induced signaling, specifically by blocking NF-kappaB and NFAT promoter activities resulting in the loss of IL-2 secretion. The function may implicate its association with LCK proposed to impair phosphorylation of TCR subunits, and/or LGALS9-dependent recruitment of PTPRC to the immunological synapse (PubMed:24337741, PubMed:26492563). In contrast, shown to activate TCR-induced signaling in T-cells probably implicating ZAP70, LCP2, LCK and FYN (By similarity). Expressed on Treg cells can inhibit Th17 cell responses (PubMed:24838857). Receptor for LGALS9 (PubMed:16286920, PubMed:24337741). Binding to LGALS9 is believed to result in suppression of T-cell responses; the resulting apoptosis of antigen-specific cells may implicate HAVCR2 phosphorylation and disruption of its association with BAG6. Binding to LGALS9 is proposed to be involved in innate immune response to intracellular pathogens. Expressed on Th1 cells interacts with LGALS9 expressed on Mycobacterium tuberculosis-infected macrophages to stimulate antibactericidal activity including IL-1 beta secretion and to restrict intracellular bacterial growth (By similarity). However, the function as receptor for LGALS9 has been challenged (PubMed:23555261). Also reported to enhance CD8+ T-cell responses to an acute infection such as by Listeria monocytogenes (By similarity). Receptor for phosphatidylserine (PtSer); PtSer-binding is calcium-dependent. May recognize PtSer on apoptotic cells leading to their phagocytosis. Mediates the engulfment of apoptotic cells by dendritic cells. Expressed on T-cells, promotes conjugation but not engulfment of apoptotic cells. Expressed on dendritic cells (DCs) positively regulates innate immune response and in synergy with Toll-like receptors promotes secretion of TNF-alpha. In tumor-imfiltrating DCs suppresses nucleic acid-mediated innate immune repsonse by interaction with HMGB1 and interfering with nucleic acid-sensing and trafficking of nucleid acids to endosomes (By similarity). Expressed on natural killer (NK) cells acts as a coreceptor to enhance IFN-gamma production in response to LGALS9 (PubMed:22323453). In contrast, shown to suppress NK cell-mediated cytotoxicity (PubMed:22383801). Negatively regulates NK cell function in LPS-induced endotoxic shock (By similarity).</text>
</comment>
<comment type="subunit">
    <text evidence="1 17 19 22">Interacts with HMGB1; impairs HMGB1 binding to B-DNA and likely HMGB1-mediated innate immune response (By similarity). Interacts with BAG6 (By similarity). Interacts (phosphorylated) with PIK3R1 and PIK3R2. Interacts (not dependent on its phosphorylation status) with FYN (By similarity). Interacts (in basal state T-cells) with VAV1; AKT1/2, LCP2, ZAP70, SYK, PIK3R1, FYN, SH3BP2 and SH2D2A. Interacts (in activated T-cells) with LCK and PLCG (PubMed:24337741, PubMed:26492563). Interacts with ILF3; this interaction promotes ILF3 ubiquitination and degradation (PubMed:34110282).</text>
</comment>
<comment type="interaction">
    <interactant intactId="EBI-11472922">
        <id>Q8TDQ0</id>
    </interactant>
    <interactant intactId="EBI-4314481">
        <id>P13688</id>
        <label>CEACAM1</label>
    </interactant>
    <organismsDiffer>false</organismsDiffer>
    <experiments>4</experiments>
</comment>
<comment type="interaction">
    <interactant intactId="EBI-11472922">
        <id>Q8TDQ0</id>
    </interactant>
    <interactant intactId="EBI-8652744">
        <id>Q96IW7</id>
        <label>SEC22A</label>
    </interactant>
    <organismsDiffer>false</organismsDiffer>
    <experiments>3</experiments>
</comment>
<comment type="interaction">
    <interactant intactId="EBI-11472922">
        <id>Q8TDQ0</id>
    </interactant>
    <interactant intactId="EBI-12015604">
        <id>Q8N2M4</id>
        <label>TMEM86A</label>
    </interactant>
    <organismsDiffer>false</organismsDiffer>
    <experiments>3</experiments>
</comment>
<comment type="subcellular location">
    <subcellularLocation>
        <location evidence="23">Cell membrane</location>
        <topology evidence="28">Single-pass type I membrane protein</topology>
    </subcellularLocation>
    <subcellularLocation>
        <location evidence="17">Cell junction</location>
    </subcellularLocation>
    <subcellularLocation>
        <location evidence="20">Cell membrane</location>
    </subcellularLocation>
    <text evidence="17">Localizes to the immunological synapse between CD8+ T-cells and target cells.</text>
</comment>
<comment type="alternative products">
    <event type="alternative splicing"/>
    <isoform>
        <id>Q8TDQ0-1</id>
        <name>1</name>
        <sequence type="displayed"/>
    </isoform>
    <isoform>
        <id>Q8TDQ0-2</id>
        <name>2</name>
        <sequence type="described" ref="VSP_017287 VSP_017288"/>
    </isoform>
</comment>
<comment type="tissue specificity">
    <text evidence="4 9 10 11 12 14 15 18">Expressed in T-helper type 1 (Th1) lymphocytes. Expressed on regulatory T (Treg) cells after TCR stimulation. Expressed in dendritic cells and natural killer (NK) cells. Expressed in epithelial tissues. Expression is increased on CD4+ and CD8+ T-cells in chronic hepatitis C virus (HCV) infection. In progressive HIV-1 infection, expression is up-regulated on HIV-1-specific CD8 T-cells.</text>
</comment>
<comment type="PTM">
    <text evidence="13">O-glycosylated with core 1 or possibly core 8 glycans.</text>
</comment>
<comment type="PTM">
    <text evidence="1 9 17">Phosphorylated on tyrosine residues; modestly increased after TCR/CD28 stimulation. Can be phosphorylated in the cytoplasmic domain by FYN (By similarity). Phosphorylation at Tyr-265 is increased by stimulation with ligand LGALS9.</text>
</comment>
<comment type="PTM">
    <text evidence="23">Palmitoylated by ZDHHC9 at Cys-296; palmitoylation stabilizes HAVCR2 by preventing binding to E3 ubiquitin ligase SYVN1, thereby suppressing its polyubiquitination and degradation.</text>
</comment>
<comment type="PTM">
    <text evidence="23">Ubiquitinated by SYVN1, leading to polyubiquitination and proteasomal degradation.</text>
</comment>
<comment type="disease">
    <text evidence="11 12">May be involved in T-cell exhaustion associated with chronic viral infections such as with human immunodeficiency virus (HIV) and hepatitic C virus (HCV).</text>
</comment>
<comment type="disease" evidence="20 21 24">
    <disease id="DI-05542">
        <name>T-cell lymphoma, subcutaneous panniculitis-like</name>
        <acronym>SPTCL</acronym>
        <description>An uncommon form of T-cell non-Hodgkin lymphoma, in which cytotoxic CD8+ T-cells infiltrate subcutaneous adipose tissue, and rimming adipocytes in a lace-like pattern. Affected individuals typically present with multiple subcutaneous nodules, systemic B-cell symptoms, and, in a subset of cases, autoimmune disorders, most commonly systemic lupus erythematosus. A subset of patients develop hemophagocytic lymphohistiocytosis. SPTCL transmission pattern is consistent with autosomal recessive inheritance with incomplete penetrance.</description>
        <dbReference type="MIM" id="618398"/>
    </disease>
    <text>Disease susceptibility is associated with variants affecting the gene represented in this entry.</text>
</comment>
<comment type="similarity">
    <text evidence="28">Belongs to the immunoglobulin superfamily. TIM family.</text>
</comment>
<comment type="caution">
    <text evidence="29">Experimental results based on the injection of HAVCR2/TIM-3 antibodies or use of HAVCR2/TIM-3-Fc fusion proteins can reflect changes in the activity of several cell types and pathways as HAVCR2/TIM-3 is expressed by multiple immune cell types.</text>
</comment>
<name>HAVR2_HUMAN</name>
<feature type="signal peptide" evidence="2">
    <location>
        <begin position="1"/>
        <end position="21"/>
    </location>
</feature>
<feature type="chain" id="PRO_0000042101" description="Hepatitis A virus cellular receptor 2">
    <location>
        <begin position="22"/>
        <end position="301"/>
    </location>
</feature>
<feature type="topological domain" description="Extracellular" evidence="2">
    <location>
        <begin position="22"/>
        <end position="202"/>
    </location>
</feature>
<feature type="transmembrane region" description="Helical" evidence="2">
    <location>
        <begin position="203"/>
        <end position="223"/>
    </location>
</feature>
<feature type="topological domain" description="Cytoplasmic" evidence="2">
    <location>
        <begin position="224"/>
        <end position="301"/>
    </location>
</feature>
<feature type="domain" description="Ig-like V-type">
    <location>
        <begin position="22"/>
        <end position="124"/>
    </location>
</feature>
<feature type="binding site" evidence="1">
    <location>
        <position position="111"/>
    </location>
    <ligand>
        <name>a 1,2-diacyl-sn-glycero-3-phospho-L-serine</name>
        <dbReference type="ChEBI" id="CHEBI:57262"/>
    </ligand>
</feature>
<feature type="binding site" evidence="1">
    <location>
        <position position="116"/>
    </location>
    <ligand>
        <name>Ca(2+)</name>
        <dbReference type="ChEBI" id="CHEBI:29108"/>
    </ligand>
</feature>
<feature type="binding site" evidence="1">
    <location>
        <position position="118"/>
    </location>
    <ligand>
        <name>a 1,2-diacyl-sn-glycero-3-phospho-L-serine</name>
        <dbReference type="ChEBI" id="CHEBI:57262"/>
    </ligand>
</feature>
<feature type="binding site" evidence="1">
    <location>
        <position position="119"/>
    </location>
    <ligand>
        <name>Ca(2+)</name>
        <dbReference type="ChEBI" id="CHEBI:29108"/>
    </ligand>
</feature>
<feature type="modified residue" description="Phosphotyrosine; by ITK" evidence="9">
    <location>
        <position position="265"/>
    </location>
</feature>
<feature type="lipid moiety-binding region" description="S-palmitoyl cysteine" evidence="23">
    <location>
        <position position="296"/>
    </location>
</feature>
<feature type="glycosylation site" description="O-linked (GalNAc...) threonine" evidence="13">
    <location>
        <position position="145"/>
    </location>
</feature>
<feature type="glycosylation site" description="N-linked (GlcNAc...) asparagine" evidence="2">
    <location>
        <position position="172"/>
    </location>
</feature>
<feature type="disulfide bond" evidence="1 3">
    <location>
        <begin position="38"/>
        <end position="110"/>
    </location>
</feature>
<feature type="disulfide bond" evidence="1 3">
    <location>
        <begin position="52"/>
        <end position="63"/>
    </location>
</feature>
<feature type="disulfide bond" evidence="1 3">
    <location>
        <begin position="58"/>
        <end position="109"/>
    </location>
</feature>
<feature type="splice variant" id="VSP_017287" description="In isoform 2." evidence="27">
    <original>AKVTPAPTRQR</original>
    <variation>GEWTFACHLYE</variation>
    <location>
        <begin position="132"/>
        <end position="142"/>
    </location>
</feature>
<feature type="splice variant" id="VSP_017288" description="In isoform 2." evidence="27">
    <location>
        <begin position="143"/>
        <end position="301"/>
    </location>
</feature>
<feature type="sequence variant" id="VAR_082211" description="In SPTCL; results in dysregulated secretion of inflammatory cytokines by macrophages; affects protein folding; decreased localization at the cell membrane; dbSNP:rs184868814." evidence="20 21">
    <original>Y</original>
    <variation>C</variation>
    <location>
        <position position="82"/>
    </location>
</feature>
<feature type="sequence variant" id="VAR_082212" description="In SPTCL; uncertain significance; affects protein folding; decreased localization at the cell membrane; dbSNP:rs35960726." evidence="20">
    <original>I</original>
    <variation>M</variation>
    <location>
        <position position="97"/>
    </location>
</feature>
<feature type="sequence variant" id="VAR_082213" description="In SPTCL; uncertain significance; dbSNP:rs147827860." evidence="21 24">
    <original>T</original>
    <variation>I</variation>
    <location>
        <position position="101"/>
    </location>
</feature>
<feature type="sequence variant" id="VAR_025342" description="In dbSNP:rs1036199." evidence="4 6 7 24 25 26">
    <original>R</original>
    <variation>L</variation>
    <location>
        <position position="140"/>
    </location>
</feature>
<feature type="mutagenesis site" description="Abolishes TCR-induced NFAT activation; when associated with A-272." evidence="19">
    <original>Y</original>
    <variation>A</variation>
    <location>
        <position position="265"/>
    </location>
</feature>
<feature type="mutagenesis site" description="No effect on TCR-induced NFAT activation (phosphomimetic mutation); when associated with E-272." evidence="19">
    <original>Y</original>
    <variation>E</variation>
    <location>
        <position position="265"/>
    </location>
</feature>
<feature type="mutagenesis site" description="Abolishes TCR-induced NFAT activation; when associated with A-265." evidence="19">
    <original>Y</original>
    <variation>A</variation>
    <location>
        <position position="272"/>
    </location>
</feature>
<feature type="mutagenesis site" description="No effect on TCR-induced NFAT activation (phosphomimetic mutation); when associated with E-265." evidence="19">
    <original>Y</original>
    <variation>E</variation>
    <location>
        <position position="272"/>
    </location>
</feature>
<feature type="mutagenesis site" description="Higher amount of polyubiquitination." evidence="23">
    <original>C</original>
    <variation>A</variation>
    <location>
        <position position="296"/>
    </location>
</feature>
<feature type="strand" evidence="32">
    <location>
        <begin position="26"/>
        <end position="29"/>
    </location>
</feature>
<feature type="strand" evidence="32">
    <location>
        <begin position="34"/>
        <end position="36"/>
    </location>
</feature>
<feature type="strand" evidence="30">
    <location>
        <begin position="44"/>
        <end position="46"/>
    </location>
</feature>
<feature type="strand" evidence="32">
    <location>
        <begin position="51"/>
        <end position="56"/>
    </location>
</feature>
<feature type="turn" evidence="32">
    <location>
        <begin position="61"/>
        <end position="63"/>
    </location>
</feature>
<feature type="strand" evidence="32">
    <location>
        <begin position="64"/>
        <end position="70"/>
    </location>
</feature>
<feature type="strand" evidence="32">
    <location>
        <begin position="72"/>
        <end position="78"/>
    </location>
</feature>
<feature type="strand" evidence="31">
    <location>
        <begin position="81"/>
        <end position="84"/>
    </location>
</feature>
<feature type="helix" evidence="32">
    <location>
        <begin position="88"/>
        <end position="90"/>
    </location>
</feature>
<feature type="strand" evidence="32">
    <location>
        <begin position="95"/>
        <end position="97"/>
    </location>
</feature>
<feature type="helix" evidence="32">
    <location>
        <begin position="102"/>
        <end position="104"/>
    </location>
</feature>
<feature type="strand" evidence="32">
    <location>
        <begin position="106"/>
        <end position="112"/>
    </location>
</feature>
<feature type="strand" evidence="32">
    <location>
        <begin position="115"/>
        <end position="118"/>
    </location>
</feature>
<feature type="strand" evidence="32">
    <location>
        <begin position="121"/>
        <end position="130"/>
    </location>
</feature>
<proteinExistence type="evidence at protein level"/>